<gene>
    <name type="primary">yclJ</name>
    <name type="ordered locus">BSU03750</name>
</gene>
<comment type="function">
    <text evidence="3">Could be member of the two-component regulatory system YclK/YclJ.</text>
</comment>
<comment type="subcellular location">
    <subcellularLocation>
        <location evidence="4">Cytoplasm</location>
    </subcellularLocation>
</comment>
<comment type="PTM">
    <text evidence="4">Phosphorylated by YclK.</text>
</comment>
<organism>
    <name type="scientific">Bacillus subtilis (strain 168)</name>
    <dbReference type="NCBI Taxonomy" id="224308"/>
    <lineage>
        <taxon>Bacteria</taxon>
        <taxon>Bacillati</taxon>
        <taxon>Bacillota</taxon>
        <taxon>Bacilli</taxon>
        <taxon>Bacillales</taxon>
        <taxon>Bacillaceae</taxon>
        <taxon>Bacillus</taxon>
    </lineage>
</organism>
<keyword id="KW-0963">Cytoplasm</keyword>
<keyword id="KW-0238">DNA-binding</keyword>
<keyword id="KW-0597">Phosphoprotein</keyword>
<keyword id="KW-1185">Reference proteome</keyword>
<keyword id="KW-0804">Transcription</keyword>
<keyword id="KW-0805">Transcription regulation</keyword>
<keyword id="KW-0902">Two-component regulatory system</keyword>
<reference key="1">
    <citation type="journal article" date="1996" name="Microbiology">
        <title>The 25 degrees-36 degrees region of the Bacillus subtilis chromosome: determination of the sequence of a 146 kb segment and identification of 113 genes.</title>
        <authorList>
            <person name="Yamane K."/>
            <person name="Kumano M."/>
            <person name="Kurita K."/>
        </authorList>
    </citation>
    <scope>NUCLEOTIDE SEQUENCE [GENOMIC DNA]</scope>
    <source>
        <strain>168</strain>
    </source>
</reference>
<reference key="2">
    <citation type="journal article" date="1997" name="Nature">
        <title>The complete genome sequence of the Gram-positive bacterium Bacillus subtilis.</title>
        <authorList>
            <person name="Kunst F."/>
            <person name="Ogasawara N."/>
            <person name="Moszer I."/>
            <person name="Albertini A.M."/>
            <person name="Alloni G."/>
            <person name="Azevedo V."/>
            <person name="Bertero M.G."/>
            <person name="Bessieres P."/>
            <person name="Bolotin A."/>
            <person name="Borchert S."/>
            <person name="Borriss R."/>
            <person name="Boursier L."/>
            <person name="Brans A."/>
            <person name="Braun M."/>
            <person name="Brignell S.C."/>
            <person name="Bron S."/>
            <person name="Brouillet S."/>
            <person name="Bruschi C.V."/>
            <person name="Caldwell B."/>
            <person name="Capuano V."/>
            <person name="Carter N.M."/>
            <person name="Choi S.-K."/>
            <person name="Codani J.-J."/>
            <person name="Connerton I.F."/>
            <person name="Cummings N.J."/>
            <person name="Daniel R.A."/>
            <person name="Denizot F."/>
            <person name="Devine K.M."/>
            <person name="Duesterhoeft A."/>
            <person name="Ehrlich S.D."/>
            <person name="Emmerson P.T."/>
            <person name="Entian K.-D."/>
            <person name="Errington J."/>
            <person name="Fabret C."/>
            <person name="Ferrari E."/>
            <person name="Foulger D."/>
            <person name="Fritz C."/>
            <person name="Fujita M."/>
            <person name="Fujita Y."/>
            <person name="Fuma S."/>
            <person name="Galizzi A."/>
            <person name="Galleron N."/>
            <person name="Ghim S.-Y."/>
            <person name="Glaser P."/>
            <person name="Goffeau A."/>
            <person name="Golightly E.J."/>
            <person name="Grandi G."/>
            <person name="Guiseppi G."/>
            <person name="Guy B.J."/>
            <person name="Haga K."/>
            <person name="Haiech J."/>
            <person name="Harwood C.R."/>
            <person name="Henaut A."/>
            <person name="Hilbert H."/>
            <person name="Holsappel S."/>
            <person name="Hosono S."/>
            <person name="Hullo M.-F."/>
            <person name="Itaya M."/>
            <person name="Jones L.-M."/>
            <person name="Joris B."/>
            <person name="Karamata D."/>
            <person name="Kasahara Y."/>
            <person name="Klaerr-Blanchard M."/>
            <person name="Klein C."/>
            <person name="Kobayashi Y."/>
            <person name="Koetter P."/>
            <person name="Koningstein G."/>
            <person name="Krogh S."/>
            <person name="Kumano M."/>
            <person name="Kurita K."/>
            <person name="Lapidus A."/>
            <person name="Lardinois S."/>
            <person name="Lauber J."/>
            <person name="Lazarevic V."/>
            <person name="Lee S.-M."/>
            <person name="Levine A."/>
            <person name="Liu H."/>
            <person name="Masuda S."/>
            <person name="Mauel C."/>
            <person name="Medigue C."/>
            <person name="Medina N."/>
            <person name="Mellado R.P."/>
            <person name="Mizuno M."/>
            <person name="Moestl D."/>
            <person name="Nakai S."/>
            <person name="Noback M."/>
            <person name="Noone D."/>
            <person name="O'Reilly M."/>
            <person name="Ogawa K."/>
            <person name="Ogiwara A."/>
            <person name="Oudega B."/>
            <person name="Park S.-H."/>
            <person name="Parro V."/>
            <person name="Pohl T.M."/>
            <person name="Portetelle D."/>
            <person name="Porwollik S."/>
            <person name="Prescott A.M."/>
            <person name="Presecan E."/>
            <person name="Pujic P."/>
            <person name="Purnelle B."/>
            <person name="Rapoport G."/>
            <person name="Rey M."/>
            <person name="Reynolds S."/>
            <person name="Rieger M."/>
            <person name="Rivolta C."/>
            <person name="Rocha E."/>
            <person name="Roche B."/>
            <person name="Rose M."/>
            <person name="Sadaie Y."/>
            <person name="Sato T."/>
            <person name="Scanlan E."/>
            <person name="Schleich S."/>
            <person name="Schroeter R."/>
            <person name="Scoffone F."/>
            <person name="Sekiguchi J."/>
            <person name="Sekowska A."/>
            <person name="Seror S.J."/>
            <person name="Serror P."/>
            <person name="Shin B.-S."/>
            <person name="Soldo B."/>
            <person name="Sorokin A."/>
            <person name="Tacconi E."/>
            <person name="Takagi T."/>
            <person name="Takahashi H."/>
            <person name="Takemaru K."/>
            <person name="Takeuchi M."/>
            <person name="Tamakoshi A."/>
            <person name="Tanaka T."/>
            <person name="Terpstra P."/>
            <person name="Tognoni A."/>
            <person name="Tosato V."/>
            <person name="Uchiyama S."/>
            <person name="Vandenbol M."/>
            <person name="Vannier F."/>
            <person name="Vassarotti A."/>
            <person name="Viari A."/>
            <person name="Wambutt R."/>
            <person name="Wedler E."/>
            <person name="Wedler H."/>
            <person name="Weitzenegger T."/>
            <person name="Winters P."/>
            <person name="Wipat A."/>
            <person name="Yamamoto H."/>
            <person name="Yamane K."/>
            <person name="Yasumoto K."/>
            <person name="Yata K."/>
            <person name="Yoshida K."/>
            <person name="Yoshikawa H.-F."/>
            <person name="Zumstein E."/>
            <person name="Yoshikawa H."/>
            <person name="Danchin A."/>
        </authorList>
    </citation>
    <scope>NUCLEOTIDE SEQUENCE [LARGE SCALE GENOMIC DNA]</scope>
    <source>
        <strain>168</strain>
    </source>
</reference>
<reference key="3">
    <citation type="journal article" date="2001" name="J. Bacteriol.">
        <title>Comprehensive DNA microarray analysis of Bacillus subtilis two-component regulatory systems.</title>
        <authorList>
            <person name="Kobayashi K."/>
            <person name="Ogura M."/>
            <person name="Yamaguchi H."/>
            <person name="Yoshida K."/>
            <person name="Ogasawara N."/>
            <person name="Tanaka T."/>
            <person name="Fujita Y."/>
        </authorList>
    </citation>
    <scope>FUNCTION</scope>
</reference>
<evidence type="ECO:0000255" key="1">
    <source>
        <dbReference type="PROSITE-ProRule" id="PRU00169"/>
    </source>
</evidence>
<evidence type="ECO:0000255" key="2">
    <source>
        <dbReference type="PROSITE-ProRule" id="PRU01091"/>
    </source>
</evidence>
<evidence type="ECO:0000269" key="3">
    <source>
    </source>
</evidence>
<evidence type="ECO:0000305" key="4"/>
<dbReference type="EMBL" id="D50453">
    <property type="protein sequence ID" value="BAA09007.1"/>
    <property type="molecule type" value="Genomic_DNA"/>
</dbReference>
<dbReference type="EMBL" id="AL009126">
    <property type="protein sequence ID" value="CAB12183.1"/>
    <property type="molecule type" value="Genomic_DNA"/>
</dbReference>
<dbReference type="PIR" id="G69762">
    <property type="entry name" value="G69762"/>
</dbReference>
<dbReference type="RefSeq" id="NP_388257.1">
    <property type="nucleotide sequence ID" value="NC_000964.3"/>
</dbReference>
<dbReference type="RefSeq" id="WP_003246532.1">
    <property type="nucleotide sequence ID" value="NZ_OZ025638.1"/>
</dbReference>
<dbReference type="SMR" id="P94413"/>
<dbReference type="FunCoup" id="P94413">
    <property type="interactions" value="66"/>
</dbReference>
<dbReference type="IntAct" id="P94413">
    <property type="interactions" value="1"/>
</dbReference>
<dbReference type="STRING" id="224308.BSU03750"/>
<dbReference type="jPOST" id="P94413"/>
<dbReference type="PaxDb" id="224308-BSU03750"/>
<dbReference type="EnsemblBacteria" id="CAB12183">
    <property type="protein sequence ID" value="CAB12183"/>
    <property type="gene ID" value="BSU_03750"/>
</dbReference>
<dbReference type="GeneID" id="938286"/>
<dbReference type="KEGG" id="bsu:BSU03750"/>
<dbReference type="PATRIC" id="fig|224308.179.peg.395"/>
<dbReference type="eggNOG" id="COG0745">
    <property type="taxonomic scope" value="Bacteria"/>
</dbReference>
<dbReference type="InParanoid" id="P94413"/>
<dbReference type="OrthoDB" id="9790442at2"/>
<dbReference type="PhylomeDB" id="P94413"/>
<dbReference type="BioCyc" id="BSUB:BSU03750-MONOMER"/>
<dbReference type="Proteomes" id="UP000001570">
    <property type="component" value="Chromosome"/>
</dbReference>
<dbReference type="GO" id="GO:0005829">
    <property type="term" value="C:cytosol"/>
    <property type="evidence" value="ECO:0000318"/>
    <property type="project" value="GO_Central"/>
</dbReference>
<dbReference type="GO" id="GO:0032993">
    <property type="term" value="C:protein-DNA complex"/>
    <property type="evidence" value="ECO:0000318"/>
    <property type="project" value="GO_Central"/>
</dbReference>
<dbReference type="GO" id="GO:0000156">
    <property type="term" value="F:phosphorelay response regulator activity"/>
    <property type="evidence" value="ECO:0000318"/>
    <property type="project" value="GO_Central"/>
</dbReference>
<dbReference type="GO" id="GO:0000976">
    <property type="term" value="F:transcription cis-regulatory region binding"/>
    <property type="evidence" value="ECO:0000318"/>
    <property type="project" value="GO_Central"/>
</dbReference>
<dbReference type="GO" id="GO:0006355">
    <property type="term" value="P:regulation of DNA-templated transcription"/>
    <property type="evidence" value="ECO:0000318"/>
    <property type="project" value="GO_Central"/>
</dbReference>
<dbReference type="CDD" id="cd17574">
    <property type="entry name" value="REC_OmpR"/>
    <property type="match status" value="1"/>
</dbReference>
<dbReference type="CDD" id="cd00383">
    <property type="entry name" value="trans_reg_C"/>
    <property type="match status" value="1"/>
</dbReference>
<dbReference type="FunFam" id="3.40.50.2300:FF:000001">
    <property type="entry name" value="DNA-binding response regulator PhoB"/>
    <property type="match status" value="1"/>
</dbReference>
<dbReference type="FunFam" id="1.10.10.10:FF:000018">
    <property type="entry name" value="DNA-binding response regulator ResD"/>
    <property type="match status" value="1"/>
</dbReference>
<dbReference type="Gene3D" id="3.40.50.2300">
    <property type="match status" value="1"/>
</dbReference>
<dbReference type="Gene3D" id="6.10.250.690">
    <property type="match status" value="1"/>
</dbReference>
<dbReference type="Gene3D" id="1.10.10.10">
    <property type="entry name" value="Winged helix-like DNA-binding domain superfamily/Winged helix DNA-binding domain"/>
    <property type="match status" value="1"/>
</dbReference>
<dbReference type="InterPro" id="IPR011006">
    <property type="entry name" value="CheY-like_superfamily"/>
</dbReference>
<dbReference type="InterPro" id="IPR001867">
    <property type="entry name" value="OmpR/PhoB-type_DNA-bd"/>
</dbReference>
<dbReference type="InterPro" id="IPR016032">
    <property type="entry name" value="Sig_transdc_resp-reg_C-effctor"/>
</dbReference>
<dbReference type="InterPro" id="IPR001789">
    <property type="entry name" value="Sig_transdc_resp-reg_receiver"/>
</dbReference>
<dbReference type="InterPro" id="IPR039420">
    <property type="entry name" value="WalR-like"/>
</dbReference>
<dbReference type="InterPro" id="IPR036388">
    <property type="entry name" value="WH-like_DNA-bd_sf"/>
</dbReference>
<dbReference type="PANTHER" id="PTHR48111:SF21">
    <property type="entry name" value="DNA-BINDING DUAL MASTER TRANSCRIPTIONAL REGULATOR RPAA"/>
    <property type="match status" value="1"/>
</dbReference>
<dbReference type="PANTHER" id="PTHR48111">
    <property type="entry name" value="REGULATOR OF RPOS"/>
    <property type="match status" value="1"/>
</dbReference>
<dbReference type="Pfam" id="PF00072">
    <property type="entry name" value="Response_reg"/>
    <property type="match status" value="1"/>
</dbReference>
<dbReference type="Pfam" id="PF00486">
    <property type="entry name" value="Trans_reg_C"/>
    <property type="match status" value="1"/>
</dbReference>
<dbReference type="SMART" id="SM00448">
    <property type="entry name" value="REC"/>
    <property type="match status" value="1"/>
</dbReference>
<dbReference type="SMART" id="SM00862">
    <property type="entry name" value="Trans_reg_C"/>
    <property type="match status" value="1"/>
</dbReference>
<dbReference type="SUPFAM" id="SSF46894">
    <property type="entry name" value="C-terminal effector domain of the bipartite response regulators"/>
    <property type="match status" value="1"/>
</dbReference>
<dbReference type="SUPFAM" id="SSF52172">
    <property type="entry name" value="CheY-like"/>
    <property type="match status" value="1"/>
</dbReference>
<dbReference type="PROSITE" id="PS51755">
    <property type="entry name" value="OMPR_PHOB"/>
    <property type="match status" value="1"/>
</dbReference>
<dbReference type="PROSITE" id="PS50110">
    <property type="entry name" value="RESPONSE_REGULATORY"/>
    <property type="match status" value="1"/>
</dbReference>
<feature type="chain" id="PRO_0000081393" description="Uncharacterized transcriptional regulatory protein YclJ">
    <location>
        <begin position="1"/>
        <end position="227"/>
    </location>
</feature>
<feature type="domain" description="Response regulatory" evidence="1">
    <location>
        <begin position="2"/>
        <end position="115"/>
    </location>
</feature>
<feature type="DNA-binding region" description="OmpR/PhoB-type" evidence="2">
    <location>
        <begin position="128"/>
        <end position="226"/>
    </location>
</feature>
<feature type="modified residue" description="4-aspartylphosphate" evidence="1">
    <location>
        <position position="51"/>
    </location>
</feature>
<accession>P94413</accession>
<proteinExistence type="inferred from homology"/>
<name>YCLJ_BACSU</name>
<sequence length="227" mass="26505">MKILMIEDNVSVCTMTEMFFFKEGFEAEFVHDGLEGYQRFTEENWDLIILDIMLPSMDGVTICRKIRETSTVPIIMLTAKDTESDQVIGFEMGADDYVTKPFSPLTLVARIKAVIRRYKATGKAVIDEDMIETECFTINKKTREVLLNGEPVENLTPKEFDLLYYLVQNPRQVFSREQLLEQVWGYQFYGDERTVDVHIKRLRKKLASEDKPFLYTVWGVGYKFDED</sequence>
<protein>
    <recommendedName>
        <fullName>Uncharacterized transcriptional regulatory protein YclJ</fullName>
    </recommendedName>
</protein>